<organism>
    <name type="scientific">Rattus norvegicus</name>
    <name type="common">Rat</name>
    <dbReference type="NCBI Taxonomy" id="10116"/>
    <lineage>
        <taxon>Eukaryota</taxon>
        <taxon>Metazoa</taxon>
        <taxon>Chordata</taxon>
        <taxon>Craniata</taxon>
        <taxon>Vertebrata</taxon>
        <taxon>Euteleostomi</taxon>
        <taxon>Mammalia</taxon>
        <taxon>Eutheria</taxon>
        <taxon>Euarchontoglires</taxon>
        <taxon>Glires</taxon>
        <taxon>Rodentia</taxon>
        <taxon>Myomorpha</taxon>
        <taxon>Muroidea</taxon>
        <taxon>Muridae</taxon>
        <taxon>Murinae</taxon>
        <taxon>Rattus</taxon>
    </lineage>
</organism>
<comment type="function">
    <text evidence="2 5">G-protein-coupled receptor for parathyroid hormone (PTH) and for parathyroid hormone-related peptide (PTHLH) (PubMed:1313566). Ligand binding causes a conformation change that triggers signaling via guanine nucleotide-binding proteins (G proteins) and modulates the activity of downstream effectors, such as adenylate cyclase (cAMP) (By similarity). PTH1R is coupled to G(s) G alpha proteins and mediates activation of adenylate cyclase activity (By similarity). PTHLH dissociates from PTH1R more rapidly than PTH; as consequence, the cAMP response induced by PTHLH decays faster than the response induced by PTH (By similarity).</text>
</comment>
<comment type="subunit">
    <text evidence="2">Homodimer in the absence of bound ligand. Peptide hormone binding leads to dissociation of the homodimer.</text>
</comment>
<comment type="subcellular location">
    <subcellularLocation>
        <location evidence="5">Cell membrane</location>
        <topology evidence="6">Multi-pass membrane protein</topology>
    </subcellularLocation>
</comment>
<comment type="PTM">
    <text evidence="2">N-glycosylated.</text>
</comment>
<comment type="similarity">
    <text evidence="6">Belongs to the G-protein coupled receptor 2 family.</text>
</comment>
<name>PTH1R_RAT</name>
<keyword id="KW-1003">Cell membrane</keyword>
<keyword id="KW-1015">Disulfide bond</keyword>
<keyword id="KW-0297">G-protein coupled receptor</keyword>
<keyword id="KW-0325">Glycoprotein</keyword>
<keyword id="KW-0472">Membrane</keyword>
<keyword id="KW-0675">Receptor</keyword>
<keyword id="KW-1185">Reference proteome</keyword>
<keyword id="KW-0732">Signal</keyword>
<keyword id="KW-0807">Transducer</keyword>
<keyword id="KW-0812">Transmembrane</keyword>
<keyword id="KW-1133">Transmembrane helix</keyword>
<dbReference type="EMBL" id="M77184">
    <property type="protein sequence ID" value="AAA41811.1"/>
    <property type="molecule type" value="mRNA"/>
</dbReference>
<dbReference type="EMBL" id="L19475">
    <property type="protein sequence ID" value="AAA68098.1"/>
    <property type="molecule type" value="mRNA"/>
</dbReference>
<dbReference type="PIR" id="I54195">
    <property type="entry name" value="I54195"/>
</dbReference>
<dbReference type="RefSeq" id="NP_064458.1">
    <property type="nucleotide sequence ID" value="NM_020073.2"/>
</dbReference>
<dbReference type="RefSeq" id="XP_006244060.1">
    <property type="nucleotide sequence ID" value="XM_006243998.3"/>
</dbReference>
<dbReference type="RefSeq" id="XP_006244061.1">
    <property type="nucleotide sequence ID" value="XM_006243999.4"/>
</dbReference>
<dbReference type="SMR" id="P25961"/>
<dbReference type="BioGRID" id="248587">
    <property type="interactions" value="1"/>
</dbReference>
<dbReference type="CORUM" id="P25961"/>
<dbReference type="DIP" id="DIP-46025N"/>
<dbReference type="FunCoup" id="P25961">
    <property type="interactions" value="152"/>
</dbReference>
<dbReference type="STRING" id="10116.ENSRNOP00000028435"/>
<dbReference type="BindingDB" id="P25961"/>
<dbReference type="ChEMBL" id="CHEMBL6038"/>
<dbReference type="DrugCentral" id="P25961"/>
<dbReference type="GuidetoPHARMACOLOGY" id="331"/>
<dbReference type="GlyCosmos" id="P25961">
    <property type="glycosylation" value="4 sites, No reported glycans"/>
</dbReference>
<dbReference type="GlyGen" id="P25961">
    <property type="glycosylation" value="4 sites"/>
</dbReference>
<dbReference type="iPTMnet" id="P25961"/>
<dbReference type="PhosphoSitePlus" id="P25961"/>
<dbReference type="PaxDb" id="10116-ENSRNOP00000028435"/>
<dbReference type="Ensembl" id="ENSRNOT00000028435.5">
    <property type="protein sequence ID" value="ENSRNOP00000028435.3"/>
    <property type="gene ID" value="ENSRNOG00000020948.6"/>
</dbReference>
<dbReference type="GeneID" id="56813"/>
<dbReference type="KEGG" id="rno:56813"/>
<dbReference type="UCSC" id="RGD:3442">
    <property type="organism name" value="rat"/>
</dbReference>
<dbReference type="AGR" id="RGD:3442"/>
<dbReference type="CTD" id="5745"/>
<dbReference type="RGD" id="3442">
    <property type="gene designation" value="Pth1r"/>
</dbReference>
<dbReference type="eggNOG" id="KOG4564">
    <property type="taxonomic scope" value="Eukaryota"/>
</dbReference>
<dbReference type="GeneTree" id="ENSGT00940000158574"/>
<dbReference type="HOGENOM" id="CLU_002753_4_3_1"/>
<dbReference type="InParanoid" id="P25961"/>
<dbReference type="PhylomeDB" id="P25961"/>
<dbReference type="TreeFam" id="TF315710"/>
<dbReference type="Reactome" id="R-RNO-373080">
    <property type="pathway name" value="Class B/2 (Secretin family receptors)"/>
</dbReference>
<dbReference type="PRO" id="PR:P25961"/>
<dbReference type="Proteomes" id="UP000002494">
    <property type="component" value="Chromosome 8"/>
</dbReference>
<dbReference type="Bgee" id="ENSRNOG00000020948">
    <property type="expression patterns" value="Expressed in adult mammalian kidney and 18 other cell types or tissues"/>
</dbReference>
<dbReference type="GO" id="GO:0016324">
    <property type="term" value="C:apical plasma membrane"/>
    <property type="evidence" value="ECO:0000314"/>
    <property type="project" value="BHF-UCL"/>
</dbReference>
<dbReference type="GO" id="GO:0016323">
    <property type="term" value="C:basolateral plasma membrane"/>
    <property type="evidence" value="ECO:0000314"/>
    <property type="project" value="BHF-UCL"/>
</dbReference>
<dbReference type="GO" id="GO:0031526">
    <property type="term" value="C:brush border membrane"/>
    <property type="evidence" value="ECO:0000314"/>
    <property type="project" value="RGD"/>
</dbReference>
<dbReference type="GO" id="GO:0005886">
    <property type="term" value="C:plasma membrane"/>
    <property type="evidence" value="ECO:0000266"/>
    <property type="project" value="RGD"/>
</dbReference>
<dbReference type="GO" id="GO:0043235">
    <property type="term" value="C:receptor complex"/>
    <property type="evidence" value="ECO:0000314"/>
    <property type="project" value="BHF-UCL"/>
</dbReference>
<dbReference type="GO" id="GO:0008528">
    <property type="term" value="F:G protein-coupled peptide receptor activity"/>
    <property type="evidence" value="ECO:0000318"/>
    <property type="project" value="GO_Central"/>
</dbReference>
<dbReference type="GO" id="GO:0004991">
    <property type="term" value="F:parathyroid hormone receptor activity"/>
    <property type="evidence" value="ECO:0000314"/>
    <property type="project" value="BHF-UCL"/>
</dbReference>
<dbReference type="GO" id="GO:0017046">
    <property type="term" value="F:peptide hormone binding"/>
    <property type="evidence" value="ECO:0000314"/>
    <property type="project" value="BHF-UCL"/>
</dbReference>
<dbReference type="GO" id="GO:0042803">
    <property type="term" value="F:protein homodimerization activity"/>
    <property type="evidence" value="ECO:0000250"/>
    <property type="project" value="UniProtKB"/>
</dbReference>
<dbReference type="GO" id="GO:0007189">
    <property type="term" value="P:adenylate cyclase-activating G protein-coupled receptor signaling pathway"/>
    <property type="evidence" value="ECO:0000314"/>
    <property type="project" value="BHF-UCL"/>
</dbReference>
<dbReference type="GO" id="GO:0007188">
    <property type="term" value="P:adenylate cyclase-modulating G protein-coupled receptor signaling pathway"/>
    <property type="evidence" value="ECO:0000314"/>
    <property type="project" value="BHF-UCL"/>
</dbReference>
<dbReference type="GO" id="GO:0030282">
    <property type="term" value="P:bone mineralization"/>
    <property type="evidence" value="ECO:0000266"/>
    <property type="project" value="RGD"/>
</dbReference>
<dbReference type="GO" id="GO:0045453">
    <property type="term" value="P:bone resorption"/>
    <property type="evidence" value="ECO:0000266"/>
    <property type="project" value="RGD"/>
</dbReference>
<dbReference type="GO" id="GO:0048469">
    <property type="term" value="P:cell maturation"/>
    <property type="evidence" value="ECO:0000266"/>
    <property type="project" value="RGD"/>
</dbReference>
<dbReference type="GO" id="GO:0008283">
    <property type="term" value="P:cell population proliferation"/>
    <property type="evidence" value="ECO:0000266"/>
    <property type="project" value="RGD"/>
</dbReference>
<dbReference type="GO" id="GO:0007166">
    <property type="term" value="P:cell surface receptor signaling pathway"/>
    <property type="evidence" value="ECO:0007669"/>
    <property type="project" value="InterPro"/>
</dbReference>
<dbReference type="GO" id="GO:0002062">
    <property type="term" value="P:chondrocyte differentiation"/>
    <property type="evidence" value="ECO:0000266"/>
    <property type="project" value="RGD"/>
</dbReference>
<dbReference type="GO" id="GO:0007187">
    <property type="term" value="P:G protein-coupled receptor signaling pathway, coupled to cyclic nucleotide second messenger"/>
    <property type="evidence" value="ECO:0000315"/>
    <property type="project" value="RGD"/>
</dbReference>
<dbReference type="GO" id="GO:0001701">
    <property type="term" value="P:in utero embryonic development"/>
    <property type="evidence" value="ECO:0000266"/>
    <property type="project" value="RGD"/>
</dbReference>
<dbReference type="GO" id="GO:0006874">
    <property type="term" value="P:intracellular calcium ion homeostasis"/>
    <property type="evidence" value="ECO:0000266"/>
    <property type="project" value="RGD"/>
</dbReference>
<dbReference type="GO" id="GO:0008285">
    <property type="term" value="P:negative regulation of cell population proliferation"/>
    <property type="evidence" value="ECO:0000266"/>
    <property type="project" value="RGD"/>
</dbReference>
<dbReference type="GO" id="GO:0001503">
    <property type="term" value="P:ossification"/>
    <property type="evidence" value="ECO:0000266"/>
    <property type="project" value="RGD"/>
</dbReference>
<dbReference type="GO" id="GO:0002076">
    <property type="term" value="P:osteoblast development"/>
    <property type="evidence" value="ECO:0000266"/>
    <property type="project" value="RGD"/>
</dbReference>
<dbReference type="GO" id="GO:0007200">
    <property type="term" value="P:phospholipase C-activating G protein-coupled receptor signaling pathway"/>
    <property type="evidence" value="ECO:0000314"/>
    <property type="project" value="RGD"/>
</dbReference>
<dbReference type="GO" id="GO:0008284">
    <property type="term" value="P:positive regulation of cell population proliferation"/>
    <property type="evidence" value="ECO:0000266"/>
    <property type="project" value="RGD"/>
</dbReference>
<dbReference type="GO" id="GO:0007204">
    <property type="term" value="P:positive regulation of cytosolic calcium ion concentration"/>
    <property type="evidence" value="ECO:0000314"/>
    <property type="project" value="RGD"/>
</dbReference>
<dbReference type="GO" id="GO:0060732">
    <property type="term" value="P:positive regulation of inositol phosphate biosynthetic process"/>
    <property type="evidence" value="ECO:0000314"/>
    <property type="project" value="BHF-UCL"/>
</dbReference>
<dbReference type="GO" id="GO:0001501">
    <property type="term" value="P:skeletal system development"/>
    <property type="evidence" value="ECO:0000266"/>
    <property type="project" value="RGD"/>
</dbReference>
<dbReference type="FunFam" id="1.20.1070.10:FF:000070">
    <property type="entry name" value="Parathyroid hormone/parathyroid hormone-related peptide receptor"/>
    <property type="match status" value="1"/>
</dbReference>
<dbReference type="Gene3D" id="4.10.1240.10">
    <property type="entry name" value="GPCR, family 2, extracellular hormone receptor domain"/>
    <property type="match status" value="1"/>
</dbReference>
<dbReference type="Gene3D" id="1.20.1070.10">
    <property type="entry name" value="Rhodopsin 7-helix transmembrane proteins"/>
    <property type="match status" value="1"/>
</dbReference>
<dbReference type="InterPro" id="IPR050332">
    <property type="entry name" value="GPCR_2"/>
</dbReference>
<dbReference type="InterPro" id="IPR017981">
    <property type="entry name" value="GPCR_2-like_7TM"/>
</dbReference>
<dbReference type="InterPro" id="IPR036445">
    <property type="entry name" value="GPCR_2_extracell_dom_sf"/>
</dbReference>
<dbReference type="InterPro" id="IPR001879">
    <property type="entry name" value="GPCR_2_extracellular_dom"/>
</dbReference>
<dbReference type="InterPro" id="IPR002170">
    <property type="entry name" value="GPCR_2_parathyroid_rcpt"/>
</dbReference>
<dbReference type="InterPro" id="IPR000832">
    <property type="entry name" value="GPCR_2_secretin-like"/>
</dbReference>
<dbReference type="InterPro" id="IPR017983">
    <property type="entry name" value="GPCR_2_secretin-like_CS"/>
</dbReference>
<dbReference type="PANTHER" id="PTHR45620:SF27">
    <property type="entry name" value="PARATHYROID HORMONE_PARATHYROID HORMONE-RELATED PEPTIDE RECEPTOR"/>
    <property type="match status" value="1"/>
</dbReference>
<dbReference type="PANTHER" id="PTHR45620">
    <property type="entry name" value="PDF RECEPTOR-LIKE PROTEIN-RELATED"/>
    <property type="match status" value="1"/>
</dbReference>
<dbReference type="Pfam" id="PF00002">
    <property type="entry name" value="7tm_2"/>
    <property type="match status" value="1"/>
</dbReference>
<dbReference type="Pfam" id="PF02793">
    <property type="entry name" value="HRM"/>
    <property type="match status" value="1"/>
</dbReference>
<dbReference type="PRINTS" id="PR00249">
    <property type="entry name" value="GPCRSECRETIN"/>
</dbReference>
<dbReference type="PRINTS" id="PR00393">
    <property type="entry name" value="PTRHORMONER"/>
</dbReference>
<dbReference type="SMART" id="SM00008">
    <property type="entry name" value="HormR"/>
    <property type="match status" value="1"/>
</dbReference>
<dbReference type="SUPFAM" id="SSF81321">
    <property type="entry name" value="Family A G protein-coupled receptor-like"/>
    <property type="match status" value="1"/>
</dbReference>
<dbReference type="SUPFAM" id="SSF111418">
    <property type="entry name" value="Hormone receptor domain"/>
    <property type="match status" value="1"/>
</dbReference>
<dbReference type="PROSITE" id="PS00649">
    <property type="entry name" value="G_PROTEIN_RECEP_F2_1"/>
    <property type="match status" value="1"/>
</dbReference>
<dbReference type="PROSITE" id="PS00650">
    <property type="entry name" value="G_PROTEIN_RECEP_F2_2"/>
    <property type="match status" value="1"/>
</dbReference>
<dbReference type="PROSITE" id="PS50227">
    <property type="entry name" value="G_PROTEIN_RECEP_F2_3"/>
    <property type="match status" value="1"/>
</dbReference>
<dbReference type="PROSITE" id="PS50261">
    <property type="entry name" value="G_PROTEIN_RECEP_F2_4"/>
    <property type="match status" value="1"/>
</dbReference>
<feature type="signal peptide" evidence="3">
    <location>
        <begin position="1"/>
        <end position="26"/>
    </location>
</feature>
<feature type="chain" id="PRO_0000012848" description="Parathyroid hormone/parathyroid hormone-related peptide receptor">
    <location>
        <begin position="27"/>
        <end position="591"/>
    </location>
</feature>
<feature type="topological domain" description="Extracellular" evidence="3">
    <location>
        <begin position="27"/>
        <end position="188"/>
    </location>
</feature>
<feature type="transmembrane region" description="Helical; Name=1" evidence="3">
    <location>
        <begin position="189"/>
        <end position="212"/>
    </location>
</feature>
<feature type="topological domain" description="Cytoplasmic" evidence="3">
    <location>
        <begin position="213"/>
        <end position="219"/>
    </location>
</feature>
<feature type="transmembrane region" description="Helical; Name=2" evidence="3">
    <location>
        <begin position="220"/>
        <end position="239"/>
    </location>
</feature>
<feature type="topological domain" description="Extracellular" evidence="3">
    <location>
        <begin position="240"/>
        <end position="282"/>
    </location>
</feature>
<feature type="transmembrane region" description="Helical; Name=3" evidence="3">
    <location>
        <begin position="283"/>
        <end position="306"/>
    </location>
</feature>
<feature type="topological domain" description="Cytoplasmic" evidence="3">
    <location>
        <begin position="307"/>
        <end position="320"/>
    </location>
</feature>
<feature type="transmembrane region" description="Helical; Name=4" evidence="3">
    <location>
        <begin position="321"/>
        <end position="342"/>
    </location>
</feature>
<feature type="topological domain" description="Extracellular" evidence="3">
    <location>
        <begin position="343"/>
        <end position="361"/>
    </location>
</feature>
<feature type="transmembrane region" description="Helical; Name=5" evidence="3">
    <location>
        <begin position="362"/>
        <end position="382"/>
    </location>
</feature>
<feature type="topological domain" description="Cytoplasmic" evidence="3">
    <location>
        <begin position="383"/>
        <end position="409"/>
    </location>
</feature>
<feature type="transmembrane region" description="Helical; Name=6" evidence="3">
    <location>
        <begin position="410"/>
        <end position="428"/>
    </location>
</feature>
<feature type="topological domain" description="Extracellular" evidence="3">
    <location>
        <begin position="429"/>
        <end position="440"/>
    </location>
</feature>
<feature type="transmembrane region" description="Helical; Name=7" evidence="3">
    <location>
        <begin position="441"/>
        <end position="463"/>
    </location>
</feature>
<feature type="topological domain" description="Cytoplasmic" evidence="3">
    <location>
        <begin position="464"/>
        <end position="591"/>
    </location>
</feature>
<feature type="region of interest" description="Disordered" evidence="4">
    <location>
        <begin position="67"/>
        <end position="104"/>
    </location>
</feature>
<feature type="region of interest" description="Disordered" evidence="4">
    <location>
        <begin position="516"/>
        <end position="544"/>
    </location>
</feature>
<feature type="short sequence motif" description="Important for interaction with G proteins" evidence="1">
    <location>
        <begin position="474"/>
        <end position="477"/>
    </location>
</feature>
<feature type="compositionally biased region" description="Basic and acidic residues" evidence="4">
    <location>
        <begin position="81"/>
        <end position="96"/>
    </location>
</feature>
<feature type="glycosylation site" description="N-linked (GlcNAc...) asparagine" evidence="3">
    <location>
        <position position="151"/>
    </location>
</feature>
<feature type="glycosylation site" description="N-linked (GlcNAc...) asparagine" evidence="3">
    <location>
        <position position="161"/>
    </location>
</feature>
<feature type="glycosylation site" description="N-linked (GlcNAc...) asparagine" evidence="3">
    <location>
        <position position="166"/>
    </location>
</feature>
<feature type="glycosylation site" description="N-linked (GlcNAc...) asparagine" evidence="3">
    <location>
        <position position="176"/>
    </location>
</feature>
<feature type="disulfide bond" evidence="2">
    <location>
        <begin position="48"/>
        <end position="117"/>
    </location>
</feature>
<feature type="disulfide bond" evidence="2">
    <location>
        <begin position="108"/>
        <end position="148"/>
    </location>
</feature>
<feature type="disulfide bond" evidence="2">
    <location>
        <begin position="131"/>
        <end position="170"/>
    </location>
</feature>
<gene>
    <name type="primary">Pth1r</name>
    <name type="synonym">Pthr</name>
    <name type="synonym">Pthr1</name>
</gene>
<protein>
    <recommendedName>
        <fullName>Parathyroid hormone/parathyroid hormone-related peptide receptor</fullName>
    </recommendedName>
    <alternativeName>
        <fullName>PTH/PTHrP type I receptor</fullName>
        <shortName>PTH/PTHr receptor</shortName>
    </alternativeName>
    <alternativeName>
        <fullName>Parathyroid hormone 1 receptor</fullName>
        <shortName>PTH1 receptor</shortName>
    </alternativeName>
</protein>
<accession>P25961</accession>
<sequence length="591" mass="66261">MGAARIAPSLALLLCCPVLSSAYALVDADDVFTKEEQIFLLHRAQAQCDKLLKEVLHTAANIMESDKGWTPASTSGKPRKEKASGKFYPESKENKDVPTGSRRRGRPCLPEWDNIVCWPLGAPGEVVAVPCPDYIYDFNHKGHAYRRCDRNGSWEVVPGHNRTWANYSECLKFMTNETREREVFDRLGMIYTVGYSMSLASLTVAVLILAYFRRLHCTRNYIHMHMFLSFMLRAASIFVKDAVLYSGFTLDEAERLTEEELHIIAQVPPPPAAAAVGYAGCRVAVTFFLYFLATNYYWILVEGLYLHSLIFMAFFSEKKYLWGFTIFGWGLPAVFVAVWVGVRATLANTGCWDLSSGHKKWIIQVPILASVVLNFILFINIIRVLATKLRETNAGRCDTRQQYRKLLRSTLVLVPLFGVHYTVFMALPYTEVSGTLWQIQMHYEMLFNSFQGFFVAIIYCFCNGEVQAEIRKSWSRWTLALDFKRKARSGSSSYSYGPMVSHTSVTNVGPRAGLSLPLSPRLPPATTNGHSQLPGHAKPGAPATETETLPVTMAVPKDDGFLNGSCSGLDEEASGSARPPPLLQEEWETVM</sequence>
<reference key="1">
    <citation type="journal article" date="1992" name="Proc. Natl. Acad. Sci. U.S.A.">
        <title>Expression cloning of a common receptor for parathyroid hormone and parathyroid hormone-related peptide from rat osteoblast-like cells: a single receptor stimulates intracellular accumulation of both cAMP and inositol trisphosphates and increases intracellular free calcium.</title>
        <authorList>
            <person name="Abou-Samra A.-B."/>
            <person name="Jueppner H."/>
            <person name="Force T."/>
            <person name="Freeman M.W."/>
            <person name="Kong X.-F."/>
            <person name="Schipani E."/>
            <person name="Urena P."/>
            <person name="Richards J."/>
            <person name="Bonventre J.V."/>
            <person name="Potts J.T. Jr."/>
            <person name="Kronenberg H.M."/>
            <person name="Segre G.V."/>
        </authorList>
    </citation>
    <scope>NUCLEOTIDE SEQUENCE [MRNA]</scope>
    <scope>FUNCTION</scope>
    <scope>SUBCELLULAR LOCATION</scope>
    <source>
        <tissue>Bone</tissue>
    </source>
</reference>
<reference key="2">
    <citation type="journal article" date="1994" name="Genomics">
        <title>Cloning of a parathyroid hormone/parathyroid hormone-related peptide receptor (PTHR) cDNA from a rat osteosarcoma (UMR 106) cell line: chromosomal assignment of the gene in the human, mouse, and rat genomes.</title>
        <authorList>
            <person name="Pausova Z."/>
            <person name="Bourdon J."/>
            <person name="Clayton D."/>
            <person name="Mattei M.-G."/>
            <person name="Seldin M.F."/>
            <person name="Janicic N."/>
            <person name="Riviere M."/>
            <person name="Szpirer J."/>
            <person name="Levan G."/>
            <person name="Szpirer C."/>
        </authorList>
    </citation>
    <scope>NUCLEOTIDE SEQUENCE [MRNA]</scope>
</reference>
<proteinExistence type="evidence at transcript level"/>
<evidence type="ECO:0000250" key="1"/>
<evidence type="ECO:0000250" key="2">
    <source>
        <dbReference type="UniProtKB" id="Q03431"/>
    </source>
</evidence>
<evidence type="ECO:0000255" key="3"/>
<evidence type="ECO:0000256" key="4">
    <source>
        <dbReference type="SAM" id="MobiDB-lite"/>
    </source>
</evidence>
<evidence type="ECO:0000269" key="5">
    <source>
    </source>
</evidence>
<evidence type="ECO:0000305" key="6"/>